<dbReference type="EMBL" id="AL954747">
    <property type="protein sequence ID" value="CAD84109.1"/>
    <property type="molecule type" value="Genomic_DNA"/>
</dbReference>
<dbReference type="RefSeq" id="WP_011110843.1">
    <property type="nucleotide sequence ID" value="NC_004757.1"/>
</dbReference>
<dbReference type="SMR" id="Q82XQ6"/>
<dbReference type="STRING" id="228410.NE0198"/>
<dbReference type="GeneID" id="87103405"/>
<dbReference type="KEGG" id="neu:NE0198"/>
<dbReference type="eggNOG" id="COG0360">
    <property type="taxonomic scope" value="Bacteria"/>
</dbReference>
<dbReference type="HOGENOM" id="CLU_113441_6_0_4"/>
<dbReference type="OrthoDB" id="9812702at2"/>
<dbReference type="PhylomeDB" id="Q82XQ6"/>
<dbReference type="Proteomes" id="UP000001416">
    <property type="component" value="Chromosome"/>
</dbReference>
<dbReference type="GO" id="GO:0022627">
    <property type="term" value="C:cytosolic small ribosomal subunit"/>
    <property type="evidence" value="ECO:0007669"/>
    <property type="project" value="TreeGrafter"/>
</dbReference>
<dbReference type="GO" id="GO:0070181">
    <property type="term" value="F:small ribosomal subunit rRNA binding"/>
    <property type="evidence" value="ECO:0007669"/>
    <property type="project" value="TreeGrafter"/>
</dbReference>
<dbReference type="GO" id="GO:0003735">
    <property type="term" value="F:structural constituent of ribosome"/>
    <property type="evidence" value="ECO:0007669"/>
    <property type="project" value="InterPro"/>
</dbReference>
<dbReference type="GO" id="GO:0006412">
    <property type="term" value="P:translation"/>
    <property type="evidence" value="ECO:0007669"/>
    <property type="project" value="UniProtKB-UniRule"/>
</dbReference>
<dbReference type="CDD" id="cd00473">
    <property type="entry name" value="bS6"/>
    <property type="match status" value="1"/>
</dbReference>
<dbReference type="Gene3D" id="3.30.70.60">
    <property type="match status" value="1"/>
</dbReference>
<dbReference type="HAMAP" id="MF_00360">
    <property type="entry name" value="Ribosomal_bS6"/>
    <property type="match status" value="1"/>
</dbReference>
<dbReference type="InterPro" id="IPR000529">
    <property type="entry name" value="Ribosomal_bS6"/>
</dbReference>
<dbReference type="InterPro" id="IPR035980">
    <property type="entry name" value="Ribosomal_bS6_sf"/>
</dbReference>
<dbReference type="InterPro" id="IPR020814">
    <property type="entry name" value="Ribosomal_S6_plastid/chlpt"/>
</dbReference>
<dbReference type="InterPro" id="IPR014717">
    <property type="entry name" value="Transl_elong_EF1B/ribsomal_bS6"/>
</dbReference>
<dbReference type="NCBIfam" id="TIGR00166">
    <property type="entry name" value="S6"/>
    <property type="match status" value="1"/>
</dbReference>
<dbReference type="PANTHER" id="PTHR21011">
    <property type="entry name" value="MITOCHONDRIAL 28S RIBOSOMAL PROTEIN S6"/>
    <property type="match status" value="1"/>
</dbReference>
<dbReference type="PANTHER" id="PTHR21011:SF1">
    <property type="entry name" value="SMALL RIBOSOMAL SUBUNIT PROTEIN BS6M"/>
    <property type="match status" value="1"/>
</dbReference>
<dbReference type="Pfam" id="PF01250">
    <property type="entry name" value="Ribosomal_S6"/>
    <property type="match status" value="1"/>
</dbReference>
<dbReference type="SUPFAM" id="SSF54995">
    <property type="entry name" value="Ribosomal protein S6"/>
    <property type="match status" value="1"/>
</dbReference>
<name>RS6_NITEU</name>
<protein>
    <recommendedName>
        <fullName evidence="1">Small ribosomal subunit protein bS6</fullName>
    </recommendedName>
    <alternativeName>
        <fullName evidence="3">30S ribosomal protein S6</fullName>
    </alternativeName>
</protein>
<evidence type="ECO:0000255" key="1">
    <source>
        <dbReference type="HAMAP-Rule" id="MF_00360"/>
    </source>
</evidence>
<evidence type="ECO:0000256" key="2">
    <source>
        <dbReference type="SAM" id="MobiDB-lite"/>
    </source>
</evidence>
<evidence type="ECO:0000305" key="3"/>
<proteinExistence type="inferred from homology"/>
<gene>
    <name evidence="1" type="primary">rpsF</name>
    <name type="ordered locus">NE0198</name>
</gene>
<comment type="function">
    <text evidence="1">Binds together with bS18 to 16S ribosomal RNA.</text>
</comment>
<comment type="similarity">
    <text evidence="1">Belongs to the bacterial ribosomal protein bS6 family.</text>
</comment>
<reference key="1">
    <citation type="journal article" date="2003" name="J. Bacteriol.">
        <title>Complete genome sequence of the ammonia-oxidizing bacterium and obligate chemolithoautotroph Nitrosomonas europaea.</title>
        <authorList>
            <person name="Chain P."/>
            <person name="Lamerdin J.E."/>
            <person name="Larimer F.W."/>
            <person name="Regala W."/>
            <person name="Lao V."/>
            <person name="Land M.L."/>
            <person name="Hauser L."/>
            <person name="Hooper A.B."/>
            <person name="Klotz M.G."/>
            <person name="Norton J."/>
            <person name="Sayavedra-Soto L.A."/>
            <person name="Arciero D.M."/>
            <person name="Hommes N.G."/>
            <person name="Whittaker M.M."/>
            <person name="Arp D.J."/>
        </authorList>
    </citation>
    <scope>NUCLEOTIDE SEQUENCE [LARGE SCALE GENOMIC DNA]</scope>
    <source>
        <strain>ATCC 19718 / CIP 103999 / KCTC 2705 / NBRC 14298</strain>
    </source>
</reference>
<organism>
    <name type="scientific">Nitrosomonas europaea (strain ATCC 19718 / CIP 103999 / KCTC 2705 / NBRC 14298)</name>
    <dbReference type="NCBI Taxonomy" id="228410"/>
    <lineage>
        <taxon>Bacteria</taxon>
        <taxon>Pseudomonadati</taxon>
        <taxon>Pseudomonadota</taxon>
        <taxon>Betaproteobacteria</taxon>
        <taxon>Nitrosomonadales</taxon>
        <taxon>Nitrosomonadaceae</taxon>
        <taxon>Nitrosomonas</taxon>
    </lineage>
</organism>
<feature type="chain" id="PRO_0000176806" description="Small ribosomal subunit protein bS6">
    <location>
        <begin position="1"/>
        <end position="146"/>
    </location>
</feature>
<feature type="region of interest" description="Disordered" evidence="2">
    <location>
        <begin position="94"/>
        <end position="146"/>
    </location>
</feature>
<feature type="compositionally biased region" description="Basic and acidic residues" evidence="2">
    <location>
        <begin position="106"/>
        <end position="115"/>
    </location>
</feature>
<feature type="compositionally biased region" description="Basic and acidic residues" evidence="2">
    <location>
        <begin position="134"/>
        <end position="146"/>
    </location>
</feature>
<accession>Q82XQ6</accession>
<sequence length="146" mass="16740">MRHYEIVFIVHPDQSEQVSAMTERYSNIVTGRSGKIHRLEDWGRRQLTYPIQKLHKAHYVLMNIECDQESLNELEHSFKFNDAILRHLVIRMNGPITTPSPMMQEGKSRPPHSSDEDSENTAPAKAKTADSPGEDTRTTEESDPKP</sequence>
<keyword id="KW-1185">Reference proteome</keyword>
<keyword id="KW-0687">Ribonucleoprotein</keyword>
<keyword id="KW-0689">Ribosomal protein</keyword>
<keyword id="KW-0694">RNA-binding</keyword>
<keyword id="KW-0699">rRNA-binding</keyword>